<sequence>MILSWKDVLSQEKKKKYFINIIRFLKKERLKKIIYPDQKDIFNAFFLTSFNDIKVVILGQDPYFSKNQAHGLSFSVPKHVTIPPSLKNIYKELNTDFKKEHIFHHGCLESWANQGVFLLNSILTVESGKPKSHSNIGWNIFTDKVISVINLYKNSVVFLFWGSNAQKKSHLINRKNHYILKAAHPSPLSAYRGFFGCKHFSLTNKILLKTKKKPINWFLI</sequence>
<reference key="1">
    <citation type="journal article" date="2000" name="Nature">
        <title>Genome sequence of the endocellular bacterial symbiont of aphids Buchnera sp. APS.</title>
        <authorList>
            <person name="Shigenobu S."/>
            <person name="Watanabe H."/>
            <person name="Hattori M."/>
            <person name="Sakaki Y."/>
            <person name="Ishikawa H."/>
        </authorList>
    </citation>
    <scope>NUCLEOTIDE SEQUENCE [LARGE SCALE GENOMIC DNA]</scope>
    <source>
        <strain>APS</strain>
    </source>
</reference>
<evidence type="ECO:0000250" key="1"/>
<evidence type="ECO:0000305" key="2"/>
<proteinExistence type="inferred from homology"/>
<organism>
    <name type="scientific">Buchnera aphidicola subsp. Acyrthosiphon pisum (strain APS)</name>
    <name type="common">Acyrthosiphon pisum symbiotic bacterium</name>
    <dbReference type="NCBI Taxonomy" id="107806"/>
    <lineage>
        <taxon>Bacteria</taxon>
        <taxon>Pseudomonadati</taxon>
        <taxon>Pseudomonadota</taxon>
        <taxon>Gammaproteobacteria</taxon>
        <taxon>Enterobacterales</taxon>
        <taxon>Erwiniaceae</taxon>
        <taxon>Buchnera</taxon>
    </lineage>
</organism>
<feature type="chain" id="PRO_0000176075" description="Uracil-DNA glycosylase">
    <location>
        <begin position="1"/>
        <end position="220"/>
    </location>
</feature>
<feature type="active site" description="Proton acceptor" evidence="1">
    <location>
        <position position="61"/>
    </location>
</feature>
<comment type="function">
    <text evidence="1">Excises uracil residues from the DNA which can arise as a result of misincorporation of dUMP residues by DNA polymerase or due to deamination of cytosine.</text>
</comment>
<comment type="catalytic activity">
    <reaction>
        <text>Hydrolyzes single-stranded DNA or mismatched double-stranded DNA and polynucleotides, releasing free uracil.</text>
        <dbReference type="EC" id="3.2.2.27"/>
    </reaction>
</comment>
<comment type="subcellular location">
    <subcellularLocation>
        <location evidence="1">Cytoplasm</location>
    </subcellularLocation>
</comment>
<comment type="similarity">
    <text evidence="2">Belongs to the uracil-DNA glycosylase (UDG) superfamily. UNG family.</text>
</comment>
<dbReference type="EC" id="3.2.2.27"/>
<dbReference type="EMBL" id="BA000003">
    <property type="protein sequence ID" value="BAB12900.1"/>
    <property type="molecule type" value="Genomic_DNA"/>
</dbReference>
<dbReference type="RefSeq" id="NP_240014.1">
    <property type="nucleotide sequence ID" value="NC_002528.1"/>
</dbReference>
<dbReference type="RefSeq" id="WP_010895988.1">
    <property type="nucleotide sequence ID" value="NC_002528.1"/>
</dbReference>
<dbReference type="SMR" id="P57280"/>
<dbReference type="EnsemblBacteria" id="BAB12900">
    <property type="protein sequence ID" value="BAB12900"/>
    <property type="gene ID" value="BAB12900"/>
</dbReference>
<dbReference type="KEGG" id="buc:BU183"/>
<dbReference type="PATRIC" id="fig|107806.10.peg.194"/>
<dbReference type="eggNOG" id="COG0692">
    <property type="taxonomic scope" value="Bacteria"/>
</dbReference>
<dbReference type="HOGENOM" id="CLU_032162_3_1_6"/>
<dbReference type="Proteomes" id="UP000001806">
    <property type="component" value="Chromosome"/>
</dbReference>
<dbReference type="GO" id="GO:0005737">
    <property type="term" value="C:cytoplasm"/>
    <property type="evidence" value="ECO:0007669"/>
    <property type="project" value="UniProtKB-SubCell"/>
</dbReference>
<dbReference type="GO" id="GO:0004844">
    <property type="term" value="F:uracil DNA N-glycosylase activity"/>
    <property type="evidence" value="ECO:0007669"/>
    <property type="project" value="UniProtKB-UniRule"/>
</dbReference>
<dbReference type="GO" id="GO:0097510">
    <property type="term" value="P:base-excision repair, AP site formation via deaminated base removal"/>
    <property type="evidence" value="ECO:0007669"/>
    <property type="project" value="TreeGrafter"/>
</dbReference>
<dbReference type="CDD" id="cd10027">
    <property type="entry name" value="UDG-F1-like"/>
    <property type="match status" value="1"/>
</dbReference>
<dbReference type="FunFam" id="3.40.470.10:FF:000001">
    <property type="entry name" value="Uracil-DNA glycosylase"/>
    <property type="match status" value="1"/>
</dbReference>
<dbReference type="Gene3D" id="3.40.470.10">
    <property type="entry name" value="Uracil-DNA glycosylase-like domain"/>
    <property type="match status" value="1"/>
</dbReference>
<dbReference type="HAMAP" id="MF_00148">
    <property type="entry name" value="UDG"/>
    <property type="match status" value="1"/>
</dbReference>
<dbReference type="InterPro" id="IPR002043">
    <property type="entry name" value="UDG_fam1"/>
</dbReference>
<dbReference type="InterPro" id="IPR018085">
    <property type="entry name" value="Ura-DNA_Glyclase_AS"/>
</dbReference>
<dbReference type="InterPro" id="IPR005122">
    <property type="entry name" value="Uracil-DNA_glycosylase-like"/>
</dbReference>
<dbReference type="InterPro" id="IPR036895">
    <property type="entry name" value="Uracil-DNA_glycosylase-like_sf"/>
</dbReference>
<dbReference type="NCBIfam" id="NF003588">
    <property type="entry name" value="PRK05254.1-1"/>
    <property type="match status" value="1"/>
</dbReference>
<dbReference type="NCBIfam" id="NF003589">
    <property type="entry name" value="PRK05254.1-2"/>
    <property type="match status" value="1"/>
</dbReference>
<dbReference type="NCBIfam" id="NF003591">
    <property type="entry name" value="PRK05254.1-4"/>
    <property type="match status" value="1"/>
</dbReference>
<dbReference type="NCBIfam" id="NF003592">
    <property type="entry name" value="PRK05254.1-5"/>
    <property type="match status" value="1"/>
</dbReference>
<dbReference type="NCBIfam" id="TIGR00628">
    <property type="entry name" value="ung"/>
    <property type="match status" value="1"/>
</dbReference>
<dbReference type="PANTHER" id="PTHR11264">
    <property type="entry name" value="URACIL-DNA GLYCOSYLASE"/>
    <property type="match status" value="1"/>
</dbReference>
<dbReference type="PANTHER" id="PTHR11264:SF0">
    <property type="entry name" value="URACIL-DNA GLYCOSYLASE"/>
    <property type="match status" value="1"/>
</dbReference>
<dbReference type="Pfam" id="PF03167">
    <property type="entry name" value="UDG"/>
    <property type="match status" value="1"/>
</dbReference>
<dbReference type="SMART" id="SM00986">
    <property type="entry name" value="UDG"/>
    <property type="match status" value="1"/>
</dbReference>
<dbReference type="SMART" id="SM00987">
    <property type="entry name" value="UreE_C"/>
    <property type="match status" value="1"/>
</dbReference>
<dbReference type="SUPFAM" id="SSF52141">
    <property type="entry name" value="Uracil-DNA glycosylase-like"/>
    <property type="match status" value="1"/>
</dbReference>
<dbReference type="PROSITE" id="PS00130">
    <property type="entry name" value="U_DNA_GLYCOSYLASE"/>
    <property type="match status" value="1"/>
</dbReference>
<protein>
    <recommendedName>
        <fullName>Uracil-DNA glycosylase</fullName>
        <shortName>UDG</shortName>
        <ecNumber>3.2.2.27</ecNumber>
    </recommendedName>
</protein>
<name>UNG_BUCAI</name>
<accession>P57280</accession>
<keyword id="KW-0963">Cytoplasm</keyword>
<keyword id="KW-0227">DNA damage</keyword>
<keyword id="KW-0234">DNA repair</keyword>
<keyword id="KW-0378">Hydrolase</keyword>
<keyword id="KW-1185">Reference proteome</keyword>
<gene>
    <name type="primary">ung</name>
    <name type="ordered locus">BU183</name>
</gene>